<name>ISPE_SALSV</name>
<protein>
    <recommendedName>
        <fullName evidence="1">4-diphosphocytidyl-2-C-methyl-D-erythritol kinase</fullName>
        <shortName evidence="1">CMK</shortName>
        <ecNumber evidence="1">2.7.1.148</ecNumber>
    </recommendedName>
    <alternativeName>
        <fullName evidence="1">4-(cytidine-5'-diphospho)-2-C-methyl-D-erythritol kinase</fullName>
    </alternativeName>
</protein>
<dbReference type="EC" id="2.7.1.148" evidence="1"/>
<dbReference type="EMBL" id="CP001127">
    <property type="protein sequence ID" value="ACF90863.1"/>
    <property type="molecule type" value="Genomic_DNA"/>
</dbReference>
<dbReference type="SMR" id="B4TXU6"/>
<dbReference type="KEGG" id="sew:SeSA_A1917"/>
<dbReference type="HOGENOM" id="CLU_053057_3_0_6"/>
<dbReference type="UniPathway" id="UPA00056">
    <property type="reaction ID" value="UER00094"/>
</dbReference>
<dbReference type="Proteomes" id="UP000001865">
    <property type="component" value="Chromosome"/>
</dbReference>
<dbReference type="GO" id="GO:0050515">
    <property type="term" value="F:4-(cytidine 5'-diphospho)-2-C-methyl-D-erythritol kinase activity"/>
    <property type="evidence" value="ECO:0007669"/>
    <property type="project" value="UniProtKB-UniRule"/>
</dbReference>
<dbReference type="GO" id="GO:0005524">
    <property type="term" value="F:ATP binding"/>
    <property type="evidence" value="ECO:0007669"/>
    <property type="project" value="UniProtKB-UniRule"/>
</dbReference>
<dbReference type="GO" id="GO:0019288">
    <property type="term" value="P:isopentenyl diphosphate biosynthetic process, methylerythritol 4-phosphate pathway"/>
    <property type="evidence" value="ECO:0007669"/>
    <property type="project" value="UniProtKB-UniRule"/>
</dbReference>
<dbReference type="GO" id="GO:0016114">
    <property type="term" value="P:terpenoid biosynthetic process"/>
    <property type="evidence" value="ECO:0007669"/>
    <property type="project" value="InterPro"/>
</dbReference>
<dbReference type="FunFam" id="3.30.230.10:FF:000022">
    <property type="entry name" value="4-diphosphocytidyl-2-C-methyl-D-erythritol kinase"/>
    <property type="match status" value="1"/>
</dbReference>
<dbReference type="FunFam" id="3.30.70.890:FF:000004">
    <property type="entry name" value="4-diphosphocytidyl-2-C-methyl-D-erythritol kinase"/>
    <property type="match status" value="1"/>
</dbReference>
<dbReference type="Gene3D" id="3.30.230.10">
    <property type="match status" value="1"/>
</dbReference>
<dbReference type="Gene3D" id="3.30.70.890">
    <property type="entry name" value="GHMP kinase, C-terminal domain"/>
    <property type="match status" value="1"/>
</dbReference>
<dbReference type="HAMAP" id="MF_00061">
    <property type="entry name" value="IspE"/>
    <property type="match status" value="1"/>
</dbReference>
<dbReference type="InterPro" id="IPR013750">
    <property type="entry name" value="GHMP_kinase_C_dom"/>
</dbReference>
<dbReference type="InterPro" id="IPR036554">
    <property type="entry name" value="GHMP_kinase_C_sf"/>
</dbReference>
<dbReference type="InterPro" id="IPR006204">
    <property type="entry name" value="GHMP_kinase_N_dom"/>
</dbReference>
<dbReference type="InterPro" id="IPR004424">
    <property type="entry name" value="IspE"/>
</dbReference>
<dbReference type="InterPro" id="IPR020568">
    <property type="entry name" value="Ribosomal_Su5_D2-typ_SF"/>
</dbReference>
<dbReference type="InterPro" id="IPR014721">
    <property type="entry name" value="Ribsml_uS5_D2-typ_fold_subgr"/>
</dbReference>
<dbReference type="NCBIfam" id="TIGR00154">
    <property type="entry name" value="ispE"/>
    <property type="match status" value="1"/>
</dbReference>
<dbReference type="PANTHER" id="PTHR43527">
    <property type="entry name" value="4-DIPHOSPHOCYTIDYL-2-C-METHYL-D-ERYTHRITOL KINASE, CHLOROPLASTIC"/>
    <property type="match status" value="1"/>
</dbReference>
<dbReference type="PANTHER" id="PTHR43527:SF2">
    <property type="entry name" value="4-DIPHOSPHOCYTIDYL-2-C-METHYL-D-ERYTHRITOL KINASE, CHLOROPLASTIC"/>
    <property type="match status" value="1"/>
</dbReference>
<dbReference type="Pfam" id="PF08544">
    <property type="entry name" value="GHMP_kinases_C"/>
    <property type="match status" value="1"/>
</dbReference>
<dbReference type="Pfam" id="PF00288">
    <property type="entry name" value="GHMP_kinases_N"/>
    <property type="match status" value="1"/>
</dbReference>
<dbReference type="PIRSF" id="PIRSF010376">
    <property type="entry name" value="IspE"/>
    <property type="match status" value="1"/>
</dbReference>
<dbReference type="SUPFAM" id="SSF55060">
    <property type="entry name" value="GHMP Kinase, C-terminal domain"/>
    <property type="match status" value="1"/>
</dbReference>
<dbReference type="SUPFAM" id="SSF54211">
    <property type="entry name" value="Ribosomal protein S5 domain 2-like"/>
    <property type="match status" value="1"/>
</dbReference>
<reference key="1">
    <citation type="journal article" date="2011" name="J. Bacteriol.">
        <title>Comparative genomics of 28 Salmonella enterica isolates: evidence for CRISPR-mediated adaptive sublineage evolution.</title>
        <authorList>
            <person name="Fricke W.F."/>
            <person name="Mammel M.K."/>
            <person name="McDermott P.F."/>
            <person name="Tartera C."/>
            <person name="White D.G."/>
            <person name="Leclerc J.E."/>
            <person name="Ravel J."/>
            <person name="Cebula T.A."/>
        </authorList>
    </citation>
    <scope>NUCLEOTIDE SEQUENCE [LARGE SCALE GENOMIC DNA]</scope>
    <source>
        <strain>CVM19633</strain>
    </source>
</reference>
<feature type="chain" id="PRO_1000190699" description="4-diphosphocytidyl-2-C-methyl-D-erythritol kinase">
    <location>
        <begin position="1"/>
        <end position="282"/>
    </location>
</feature>
<feature type="active site" evidence="1">
    <location>
        <position position="9"/>
    </location>
</feature>
<feature type="active site" evidence="1">
    <location>
        <position position="140"/>
    </location>
</feature>
<feature type="binding site" evidence="1">
    <location>
        <begin position="98"/>
        <end position="108"/>
    </location>
    <ligand>
        <name>ATP</name>
        <dbReference type="ChEBI" id="CHEBI:30616"/>
    </ligand>
</feature>
<evidence type="ECO:0000255" key="1">
    <source>
        <dbReference type="HAMAP-Rule" id="MF_00061"/>
    </source>
</evidence>
<accession>B4TXU6</accession>
<comment type="function">
    <text evidence="1">Catalyzes the phosphorylation of the position 2 hydroxy group of 4-diphosphocytidyl-2C-methyl-D-erythritol.</text>
</comment>
<comment type="catalytic activity">
    <reaction evidence="1">
        <text>4-CDP-2-C-methyl-D-erythritol + ATP = 4-CDP-2-C-methyl-D-erythritol 2-phosphate + ADP + H(+)</text>
        <dbReference type="Rhea" id="RHEA:18437"/>
        <dbReference type="ChEBI" id="CHEBI:15378"/>
        <dbReference type="ChEBI" id="CHEBI:30616"/>
        <dbReference type="ChEBI" id="CHEBI:57823"/>
        <dbReference type="ChEBI" id="CHEBI:57919"/>
        <dbReference type="ChEBI" id="CHEBI:456216"/>
        <dbReference type="EC" id="2.7.1.148"/>
    </reaction>
</comment>
<comment type="pathway">
    <text evidence="1">Isoprenoid biosynthesis; isopentenyl diphosphate biosynthesis via DXP pathway; isopentenyl diphosphate from 1-deoxy-D-xylulose 5-phosphate: step 3/6.</text>
</comment>
<comment type="subunit">
    <text evidence="1">Homodimer.</text>
</comment>
<comment type="similarity">
    <text evidence="1">Belongs to the GHMP kinase family. IspE subfamily.</text>
</comment>
<sequence length="282" mass="30739">MTHWPSPAKLNLFLYITGQRADGYHTLQTLFQFLDYGDTLHIEPRHDGEIHLLTPVTGVENEDNLIVRAARLLMKAASESGRLPVGSGADISIEKRLPMGGGLGGGSSNAATVLVALNHLWQCGLSIDELATLGLTLGADVPVFVRGHAAFAEGVGEILTPVNPPEKWYLVAHPGVSIPTPVIFKDPQLPRNTPKRSIDTLLKCEFSNDCEVIARKRFREVDAALSWLLEYAPSRLTGTGACVFAEFDTESCARQVLEQAPEWLNAFVAKGVNLSPLHRELL</sequence>
<keyword id="KW-0067">ATP-binding</keyword>
<keyword id="KW-0414">Isoprene biosynthesis</keyword>
<keyword id="KW-0418">Kinase</keyword>
<keyword id="KW-0547">Nucleotide-binding</keyword>
<keyword id="KW-0808">Transferase</keyword>
<proteinExistence type="inferred from homology"/>
<organism>
    <name type="scientific">Salmonella schwarzengrund (strain CVM19633)</name>
    <dbReference type="NCBI Taxonomy" id="439843"/>
    <lineage>
        <taxon>Bacteria</taxon>
        <taxon>Pseudomonadati</taxon>
        <taxon>Pseudomonadota</taxon>
        <taxon>Gammaproteobacteria</taxon>
        <taxon>Enterobacterales</taxon>
        <taxon>Enterobacteriaceae</taxon>
        <taxon>Salmonella</taxon>
    </lineage>
</organism>
<gene>
    <name evidence="1" type="primary">ispE</name>
    <name type="ordered locus">SeSA_A1917</name>
</gene>